<feature type="signal peptide" evidence="1">
    <location>
        <begin position="1"/>
        <end position="17"/>
    </location>
</feature>
<feature type="chain" id="PRO_0000342618" description="Small integral membrane protein 7-A">
    <location>
        <begin position="18"/>
        <end position="75"/>
    </location>
</feature>
<feature type="topological domain" description="Extracellular" evidence="1">
    <location>
        <begin position="18"/>
        <end position="53"/>
    </location>
</feature>
<feature type="transmembrane region" description="Helical" evidence="1">
    <location>
        <begin position="54"/>
        <end position="74"/>
    </location>
</feature>
<feature type="topological domain" description="Cytoplasmic" evidence="1">
    <location>
        <position position="75"/>
    </location>
</feature>
<accession>Q6INP0</accession>
<evidence type="ECO:0000255" key="1"/>
<evidence type="ECO:0000305" key="2"/>
<comment type="subcellular location">
    <subcellularLocation>
        <location evidence="2">Membrane</location>
        <topology evidence="2">Single-pass type I membrane protein</topology>
    </subcellularLocation>
</comment>
<comment type="similarity">
    <text evidence="2">Belongs to the SMIM7 family.</text>
</comment>
<sequence length="75" mass="8530">MIGDLLLFGTLLVNAGAVLNFKLKKKESQGFGDDLTEATTGDNIREFLLSLRYFRIFIALWNIFMMFCMIVLFGS</sequence>
<proteinExistence type="inferred from homology"/>
<reference key="1">
    <citation type="submission" date="2004-06" db="EMBL/GenBank/DDBJ databases">
        <authorList>
            <consortium name="NIH - Xenopus Gene Collection (XGC) project"/>
        </authorList>
    </citation>
    <scope>NUCLEOTIDE SEQUENCE [LARGE SCALE MRNA]</scope>
    <source>
        <tissue>Liver</tissue>
    </source>
</reference>
<protein>
    <recommendedName>
        <fullName>Small integral membrane protein 7-A</fullName>
    </recommendedName>
</protein>
<keyword id="KW-0472">Membrane</keyword>
<keyword id="KW-1185">Reference proteome</keyword>
<keyword id="KW-0732">Signal</keyword>
<keyword id="KW-0812">Transmembrane</keyword>
<keyword id="KW-1133">Transmembrane helix</keyword>
<gene>
    <name type="primary">smim7-a</name>
</gene>
<dbReference type="EMBL" id="BC072236">
    <property type="protein sequence ID" value="AAH72236.1"/>
    <property type="molecule type" value="mRNA"/>
</dbReference>
<dbReference type="RefSeq" id="NP_001085400.1">
    <property type="nucleotide sequence ID" value="NM_001091931.1"/>
</dbReference>
<dbReference type="DNASU" id="443826"/>
<dbReference type="GeneID" id="443826"/>
<dbReference type="KEGG" id="xla:443826"/>
<dbReference type="CTD" id="443826"/>
<dbReference type="OrthoDB" id="10047572at2759"/>
<dbReference type="Proteomes" id="UP000186698">
    <property type="component" value="Chromosome 1S"/>
</dbReference>
<dbReference type="Bgee" id="443826">
    <property type="expression patterns" value="Expressed in internal ear and 19 other cell types or tissues"/>
</dbReference>
<dbReference type="GO" id="GO:0016020">
    <property type="term" value="C:membrane"/>
    <property type="evidence" value="ECO:0007669"/>
    <property type="project" value="UniProtKB-SubCell"/>
</dbReference>
<dbReference type="InterPro" id="IPR037659">
    <property type="entry name" value="SMIM7"/>
</dbReference>
<dbReference type="PANTHER" id="PTHR28622">
    <property type="entry name" value="SMALL INTEGRAL MEMBRANE PROTEIN 7"/>
    <property type="match status" value="1"/>
</dbReference>
<dbReference type="PANTHER" id="PTHR28622:SF1">
    <property type="entry name" value="SMALL INTEGRAL MEMBRANE PROTEIN 7"/>
    <property type="match status" value="1"/>
</dbReference>
<name>SMI7A_XENLA</name>
<organism>
    <name type="scientific">Xenopus laevis</name>
    <name type="common">African clawed frog</name>
    <dbReference type="NCBI Taxonomy" id="8355"/>
    <lineage>
        <taxon>Eukaryota</taxon>
        <taxon>Metazoa</taxon>
        <taxon>Chordata</taxon>
        <taxon>Craniata</taxon>
        <taxon>Vertebrata</taxon>
        <taxon>Euteleostomi</taxon>
        <taxon>Amphibia</taxon>
        <taxon>Batrachia</taxon>
        <taxon>Anura</taxon>
        <taxon>Pipoidea</taxon>
        <taxon>Pipidae</taxon>
        <taxon>Xenopodinae</taxon>
        <taxon>Xenopus</taxon>
        <taxon>Xenopus</taxon>
    </lineage>
</organism>